<accession>Q0G9I8</accession>
<feature type="chain" id="PRO_0000276540" description="Cytochrome b6-f complex subunit 4">
    <location>
        <begin position="1"/>
        <end position="158"/>
    </location>
</feature>
<feature type="transmembrane region" description="Helical" evidence="2">
    <location>
        <begin position="34"/>
        <end position="54"/>
    </location>
</feature>
<feature type="transmembrane region" description="Helical" evidence="2">
    <location>
        <begin position="93"/>
        <end position="113"/>
    </location>
</feature>
<feature type="transmembrane region" description="Helical" evidence="2">
    <location>
        <begin position="129"/>
        <end position="149"/>
    </location>
</feature>
<keyword id="KW-0150">Chloroplast</keyword>
<keyword id="KW-0249">Electron transport</keyword>
<keyword id="KW-0472">Membrane</keyword>
<keyword id="KW-0602">Photosynthesis</keyword>
<keyword id="KW-0934">Plastid</keyword>
<keyword id="KW-0793">Thylakoid</keyword>
<keyword id="KW-0812">Transmembrane</keyword>
<keyword id="KW-1133">Transmembrane helix</keyword>
<keyword id="KW-0813">Transport</keyword>
<reference key="1">
    <citation type="journal article" date="2006" name="BMC Evol. Biol.">
        <title>Complete plastid genome sequences of Drimys, Liriodendron, and Piper: implications for the phylogenetic relationships of magnoliids.</title>
        <authorList>
            <person name="Cai Z."/>
            <person name="Penaflor C."/>
            <person name="Kuehl J.V."/>
            <person name="Leebens-Mack J."/>
            <person name="Carlson J.E."/>
            <person name="dePamphilis C.W."/>
            <person name="Boore J.L."/>
            <person name="Jansen R.K."/>
        </authorList>
    </citation>
    <scope>NUCLEOTIDE SEQUENCE [LARGE SCALE GENOMIC DNA]</scope>
</reference>
<proteinExistence type="inferred from homology"/>
<dbReference type="EMBL" id="DQ899947">
    <property type="protein sequence ID" value="ABI32540.1"/>
    <property type="molecule type" value="Genomic_DNA"/>
</dbReference>
<dbReference type="RefSeq" id="YP_740233.1">
    <property type="nucleotide sequence ID" value="NC_008326.1"/>
</dbReference>
<dbReference type="SMR" id="Q0G9I8"/>
<dbReference type="GeneID" id="4266657"/>
<dbReference type="GO" id="GO:0009535">
    <property type="term" value="C:chloroplast thylakoid membrane"/>
    <property type="evidence" value="ECO:0007669"/>
    <property type="project" value="UniProtKB-SubCell"/>
</dbReference>
<dbReference type="GO" id="GO:0045158">
    <property type="term" value="F:electron transporter, transferring electrons within cytochrome b6/f complex of photosystem II activity"/>
    <property type="evidence" value="ECO:0007669"/>
    <property type="project" value="UniProtKB-UniRule"/>
</dbReference>
<dbReference type="GO" id="GO:0045156">
    <property type="term" value="F:electron transporter, transferring electrons within the cyclic electron transport pathway of photosynthesis activity"/>
    <property type="evidence" value="ECO:0007669"/>
    <property type="project" value="InterPro"/>
</dbReference>
<dbReference type="GO" id="GO:0016491">
    <property type="term" value="F:oxidoreductase activity"/>
    <property type="evidence" value="ECO:0007669"/>
    <property type="project" value="InterPro"/>
</dbReference>
<dbReference type="GO" id="GO:0009767">
    <property type="term" value="P:photosynthetic electron transport chain"/>
    <property type="evidence" value="ECO:0007669"/>
    <property type="project" value="InterPro"/>
</dbReference>
<dbReference type="CDD" id="cd00290">
    <property type="entry name" value="cytochrome_b_C"/>
    <property type="match status" value="1"/>
</dbReference>
<dbReference type="FunFam" id="1.10.287.980:FF:000001">
    <property type="entry name" value="Cytochrome b6-f complex subunit 4"/>
    <property type="match status" value="1"/>
</dbReference>
<dbReference type="FunFam" id="1.20.5.510:FF:000002">
    <property type="entry name" value="Cytochrome b6-f complex subunit 4"/>
    <property type="match status" value="1"/>
</dbReference>
<dbReference type="Gene3D" id="1.10.287.980">
    <property type="entry name" value="plastocyanin oxidoreductase"/>
    <property type="match status" value="1"/>
</dbReference>
<dbReference type="Gene3D" id="1.20.5.510">
    <property type="entry name" value="Single helix bin"/>
    <property type="match status" value="1"/>
</dbReference>
<dbReference type="HAMAP" id="MF_01344">
    <property type="entry name" value="Cytb6_f_subIV"/>
    <property type="match status" value="1"/>
</dbReference>
<dbReference type="InterPro" id="IPR005798">
    <property type="entry name" value="Cyt_b/b6_C"/>
</dbReference>
<dbReference type="InterPro" id="IPR036150">
    <property type="entry name" value="Cyt_b/b6_C_sf"/>
</dbReference>
<dbReference type="InterPro" id="IPR005870">
    <property type="entry name" value="Cyt_b6/f_cplx_suIV"/>
</dbReference>
<dbReference type="InterPro" id="IPR048260">
    <property type="entry name" value="Cytochrome_b_C_euk/bac"/>
</dbReference>
<dbReference type="NCBIfam" id="TIGR01156">
    <property type="entry name" value="cytb6_f_IV"/>
    <property type="match status" value="1"/>
</dbReference>
<dbReference type="PANTHER" id="PTHR19271">
    <property type="entry name" value="CYTOCHROME B"/>
    <property type="match status" value="1"/>
</dbReference>
<dbReference type="PANTHER" id="PTHR19271:SF40">
    <property type="entry name" value="CYTOCHROME B"/>
    <property type="match status" value="1"/>
</dbReference>
<dbReference type="Pfam" id="PF00032">
    <property type="entry name" value="Cytochrom_B_C"/>
    <property type="match status" value="1"/>
</dbReference>
<dbReference type="PIRSF" id="PIRSF000033">
    <property type="entry name" value="B6f_17K"/>
    <property type="match status" value="1"/>
</dbReference>
<dbReference type="SUPFAM" id="SSF81648">
    <property type="entry name" value="a domain/subunit of cytochrome bc1 complex (Ubiquinol-cytochrome c reductase)"/>
    <property type="match status" value="1"/>
</dbReference>
<dbReference type="PROSITE" id="PS51003">
    <property type="entry name" value="CYTB_CTER"/>
    <property type="match status" value="1"/>
</dbReference>
<name>PETD_LIRTU</name>
<organism>
    <name type="scientific">Liriodendron tulipifera</name>
    <name type="common">Tuliptree</name>
    <name type="synonym">Tulip poplar</name>
    <dbReference type="NCBI Taxonomy" id="3415"/>
    <lineage>
        <taxon>Eukaryota</taxon>
        <taxon>Viridiplantae</taxon>
        <taxon>Streptophyta</taxon>
        <taxon>Embryophyta</taxon>
        <taxon>Tracheophyta</taxon>
        <taxon>Spermatophyta</taxon>
        <taxon>Magnoliopsida</taxon>
        <taxon>Magnoliidae</taxon>
        <taxon>Magnoliales</taxon>
        <taxon>Magnoliaceae</taxon>
        <taxon>Liriodendron</taxon>
    </lineage>
</organism>
<gene>
    <name evidence="2" type="primary">petD</name>
</gene>
<comment type="function">
    <text evidence="2">Component of the cytochrome b6-f complex, which mediates electron transfer between photosystem II (PSII) and photosystem I (PSI), cyclic electron flow around PSI, and state transitions.</text>
</comment>
<comment type="subunit">
    <text evidence="1">The 4 large subunits of the cytochrome b6-f complex are cytochrome b6, subunit IV (17 kDa polypeptide, petD), cytochrome f and the Rieske protein, while the 4 small subunits are petG, petL, petM and petN. The complex functions as a dimer (By similarity).</text>
</comment>
<comment type="subcellular location">
    <subcellularLocation>
        <location evidence="2">Plastid</location>
        <location evidence="2">Chloroplast thylakoid membrane</location>
        <topology evidence="2">Multi-pass membrane protein</topology>
    </subcellularLocation>
</comment>
<comment type="similarity">
    <text evidence="2">Belongs to the cytochrome b family. PetD subfamily.</text>
</comment>
<geneLocation type="chloroplast"/>
<evidence type="ECO:0000250" key="1"/>
<evidence type="ECO:0000255" key="2">
    <source>
        <dbReference type="HAMAP-Rule" id="MF_01344"/>
    </source>
</evidence>
<protein>
    <recommendedName>
        <fullName evidence="2">Cytochrome b6-f complex subunit 4</fullName>
    </recommendedName>
    <alternativeName>
        <fullName evidence="2">17 kDa polypeptide</fullName>
    </alternativeName>
</protein>
<sequence>MTKKPDLNDPVLRAKLAKGMGHNYYGEPAWPNDLLYISPVVILGTIACNVGLAVLEPSMIGEPADPFATPLEILPEWYFFPVFQILRTVPNKLLGVLLMVSVPTGLLTVPFLENVNKFQNPFRRPVATTVFLIGTVIALWLGIGATLPIDKSLTLGLF</sequence>